<keyword id="KW-0021">Allosteric enzyme</keyword>
<keyword id="KW-0067">ATP-binding</keyword>
<keyword id="KW-0963">Cytoplasm</keyword>
<keyword id="KW-0418">Kinase</keyword>
<keyword id="KW-0547">Nucleotide-binding</keyword>
<keyword id="KW-0665">Pyrimidine biosynthesis</keyword>
<keyword id="KW-0808">Transferase</keyword>
<organism>
    <name type="scientific">Chelativorans sp. (strain BNC1)</name>
    <dbReference type="NCBI Taxonomy" id="266779"/>
    <lineage>
        <taxon>Bacteria</taxon>
        <taxon>Pseudomonadati</taxon>
        <taxon>Pseudomonadota</taxon>
        <taxon>Alphaproteobacteria</taxon>
        <taxon>Hyphomicrobiales</taxon>
        <taxon>Phyllobacteriaceae</taxon>
        <taxon>Chelativorans</taxon>
    </lineage>
</organism>
<accession>Q11IJ6</accession>
<evidence type="ECO:0000255" key="1">
    <source>
        <dbReference type="HAMAP-Rule" id="MF_01220"/>
    </source>
</evidence>
<name>PYRH_CHESB</name>
<gene>
    <name evidence="1" type="primary">pyrH</name>
    <name type="ordered locus">Meso_1383</name>
</gene>
<protein>
    <recommendedName>
        <fullName evidence="1">Uridylate kinase</fullName>
        <shortName evidence="1">UK</shortName>
        <ecNumber evidence="1">2.7.4.22</ecNumber>
    </recommendedName>
    <alternativeName>
        <fullName evidence="1">Uridine monophosphate kinase</fullName>
        <shortName evidence="1">UMP kinase</shortName>
        <shortName evidence="1">UMPK</shortName>
    </alternativeName>
</protein>
<dbReference type="EC" id="2.7.4.22" evidence="1"/>
<dbReference type="EMBL" id="CP000390">
    <property type="protein sequence ID" value="ABG62779.1"/>
    <property type="molecule type" value="Genomic_DNA"/>
</dbReference>
<dbReference type="SMR" id="Q11IJ6"/>
<dbReference type="STRING" id="266779.Meso_1383"/>
<dbReference type="KEGG" id="mes:Meso_1383"/>
<dbReference type="eggNOG" id="COG0528">
    <property type="taxonomic scope" value="Bacteria"/>
</dbReference>
<dbReference type="HOGENOM" id="CLU_033861_0_0_5"/>
<dbReference type="OrthoDB" id="9807458at2"/>
<dbReference type="UniPathway" id="UPA00159">
    <property type="reaction ID" value="UER00275"/>
</dbReference>
<dbReference type="GO" id="GO:0005829">
    <property type="term" value="C:cytosol"/>
    <property type="evidence" value="ECO:0007669"/>
    <property type="project" value="TreeGrafter"/>
</dbReference>
<dbReference type="GO" id="GO:0005524">
    <property type="term" value="F:ATP binding"/>
    <property type="evidence" value="ECO:0007669"/>
    <property type="project" value="UniProtKB-KW"/>
</dbReference>
<dbReference type="GO" id="GO:0033862">
    <property type="term" value="F:UMP kinase activity"/>
    <property type="evidence" value="ECO:0007669"/>
    <property type="project" value="UniProtKB-EC"/>
</dbReference>
<dbReference type="GO" id="GO:0044210">
    <property type="term" value="P:'de novo' CTP biosynthetic process"/>
    <property type="evidence" value="ECO:0007669"/>
    <property type="project" value="UniProtKB-UniRule"/>
</dbReference>
<dbReference type="GO" id="GO:0006225">
    <property type="term" value="P:UDP biosynthetic process"/>
    <property type="evidence" value="ECO:0007669"/>
    <property type="project" value="TreeGrafter"/>
</dbReference>
<dbReference type="CDD" id="cd04254">
    <property type="entry name" value="AAK_UMPK-PyrH-Ec"/>
    <property type="match status" value="1"/>
</dbReference>
<dbReference type="FunFam" id="3.40.1160.10:FF:000001">
    <property type="entry name" value="Uridylate kinase"/>
    <property type="match status" value="1"/>
</dbReference>
<dbReference type="Gene3D" id="3.40.1160.10">
    <property type="entry name" value="Acetylglutamate kinase-like"/>
    <property type="match status" value="1"/>
</dbReference>
<dbReference type="HAMAP" id="MF_01220_B">
    <property type="entry name" value="PyrH_B"/>
    <property type="match status" value="1"/>
</dbReference>
<dbReference type="InterPro" id="IPR036393">
    <property type="entry name" value="AceGlu_kinase-like_sf"/>
</dbReference>
<dbReference type="InterPro" id="IPR001048">
    <property type="entry name" value="Asp/Glu/Uridylate_kinase"/>
</dbReference>
<dbReference type="InterPro" id="IPR011817">
    <property type="entry name" value="Uridylate_kinase"/>
</dbReference>
<dbReference type="InterPro" id="IPR015963">
    <property type="entry name" value="Uridylate_kinase_bac"/>
</dbReference>
<dbReference type="NCBIfam" id="TIGR02075">
    <property type="entry name" value="pyrH_bact"/>
    <property type="match status" value="1"/>
</dbReference>
<dbReference type="PANTHER" id="PTHR42833">
    <property type="entry name" value="URIDYLATE KINASE"/>
    <property type="match status" value="1"/>
</dbReference>
<dbReference type="PANTHER" id="PTHR42833:SF4">
    <property type="entry name" value="URIDYLATE KINASE PUMPKIN, CHLOROPLASTIC"/>
    <property type="match status" value="1"/>
</dbReference>
<dbReference type="Pfam" id="PF00696">
    <property type="entry name" value="AA_kinase"/>
    <property type="match status" value="1"/>
</dbReference>
<dbReference type="PIRSF" id="PIRSF005650">
    <property type="entry name" value="Uridylate_kin"/>
    <property type="match status" value="1"/>
</dbReference>
<dbReference type="SUPFAM" id="SSF53633">
    <property type="entry name" value="Carbamate kinase-like"/>
    <property type="match status" value="1"/>
</dbReference>
<feature type="chain" id="PRO_0000323883" description="Uridylate kinase">
    <location>
        <begin position="1"/>
        <end position="247"/>
    </location>
</feature>
<feature type="region of interest" description="Involved in allosteric activation by GTP" evidence="1">
    <location>
        <begin position="19"/>
        <end position="24"/>
    </location>
</feature>
<feature type="binding site" evidence="1">
    <location>
        <begin position="11"/>
        <end position="14"/>
    </location>
    <ligand>
        <name>ATP</name>
        <dbReference type="ChEBI" id="CHEBI:30616"/>
    </ligand>
</feature>
<feature type="binding site" evidence="1">
    <location>
        <position position="53"/>
    </location>
    <ligand>
        <name>UMP</name>
        <dbReference type="ChEBI" id="CHEBI:57865"/>
    </ligand>
</feature>
<feature type="binding site" evidence="1">
    <location>
        <position position="54"/>
    </location>
    <ligand>
        <name>ATP</name>
        <dbReference type="ChEBI" id="CHEBI:30616"/>
    </ligand>
</feature>
<feature type="binding site" evidence="1">
    <location>
        <position position="58"/>
    </location>
    <ligand>
        <name>ATP</name>
        <dbReference type="ChEBI" id="CHEBI:30616"/>
    </ligand>
</feature>
<feature type="binding site" evidence="1">
    <location>
        <position position="73"/>
    </location>
    <ligand>
        <name>UMP</name>
        <dbReference type="ChEBI" id="CHEBI:57865"/>
    </ligand>
</feature>
<feature type="binding site" evidence="1">
    <location>
        <begin position="134"/>
        <end position="141"/>
    </location>
    <ligand>
        <name>UMP</name>
        <dbReference type="ChEBI" id="CHEBI:57865"/>
    </ligand>
</feature>
<feature type="binding site" evidence="1">
    <location>
        <position position="161"/>
    </location>
    <ligand>
        <name>ATP</name>
        <dbReference type="ChEBI" id="CHEBI:30616"/>
    </ligand>
</feature>
<feature type="binding site" evidence="1">
    <location>
        <position position="162"/>
    </location>
    <ligand>
        <name>ATP</name>
        <dbReference type="ChEBI" id="CHEBI:30616"/>
    </ligand>
</feature>
<feature type="binding site" evidence="1">
    <location>
        <position position="167"/>
    </location>
    <ligand>
        <name>ATP</name>
        <dbReference type="ChEBI" id="CHEBI:30616"/>
    </ligand>
</feature>
<feature type="binding site" evidence="1">
    <location>
        <position position="170"/>
    </location>
    <ligand>
        <name>ATP</name>
        <dbReference type="ChEBI" id="CHEBI:30616"/>
    </ligand>
</feature>
<sequence>MTPRYRRVVLKASGEALMGKQGFGIDVSVVDQIAADIADALSLGVEVGVVIGGGNIFRGVAVASKGGDRVTGDHMGMLATVINSLALRTSLAKIGVEAVVLSAIAMPELCESFSQRQALAYMDAGKVVIFAGGTGNPFFTTDSAAALRAAEIGADALFKGTQVDGVYSADPRKDANAVRYDHITHDQVIRDGLAIMDTAAIALARENNIPIIVFSIHEAGGFGAILRGGGHCTIVDDDPAAQQQASA</sequence>
<proteinExistence type="inferred from homology"/>
<comment type="function">
    <text evidence="1">Catalyzes the reversible phosphorylation of UMP to UDP.</text>
</comment>
<comment type="catalytic activity">
    <reaction evidence="1">
        <text>UMP + ATP = UDP + ADP</text>
        <dbReference type="Rhea" id="RHEA:24400"/>
        <dbReference type="ChEBI" id="CHEBI:30616"/>
        <dbReference type="ChEBI" id="CHEBI:57865"/>
        <dbReference type="ChEBI" id="CHEBI:58223"/>
        <dbReference type="ChEBI" id="CHEBI:456216"/>
        <dbReference type="EC" id="2.7.4.22"/>
    </reaction>
</comment>
<comment type="activity regulation">
    <text evidence="1">Allosterically activated by GTP. Inhibited by UTP.</text>
</comment>
<comment type="pathway">
    <text evidence="1">Pyrimidine metabolism; CTP biosynthesis via de novo pathway; UDP from UMP (UMPK route): step 1/1.</text>
</comment>
<comment type="subunit">
    <text evidence="1">Homohexamer.</text>
</comment>
<comment type="subcellular location">
    <subcellularLocation>
        <location evidence="1">Cytoplasm</location>
    </subcellularLocation>
</comment>
<comment type="similarity">
    <text evidence="1">Belongs to the UMP kinase family.</text>
</comment>
<reference key="1">
    <citation type="submission" date="2006-06" db="EMBL/GenBank/DDBJ databases">
        <title>Complete sequence of chromosome of Mesorhizobium sp. BNC1.</title>
        <authorList>
            <consortium name="US DOE Joint Genome Institute"/>
            <person name="Copeland A."/>
            <person name="Lucas S."/>
            <person name="Lapidus A."/>
            <person name="Barry K."/>
            <person name="Detter J.C."/>
            <person name="Glavina del Rio T."/>
            <person name="Hammon N."/>
            <person name="Israni S."/>
            <person name="Dalin E."/>
            <person name="Tice H."/>
            <person name="Pitluck S."/>
            <person name="Chertkov O."/>
            <person name="Brettin T."/>
            <person name="Bruce D."/>
            <person name="Han C."/>
            <person name="Tapia R."/>
            <person name="Gilna P."/>
            <person name="Schmutz J."/>
            <person name="Larimer F."/>
            <person name="Land M."/>
            <person name="Hauser L."/>
            <person name="Kyrpides N."/>
            <person name="Mikhailova N."/>
            <person name="Richardson P."/>
        </authorList>
    </citation>
    <scope>NUCLEOTIDE SEQUENCE [LARGE SCALE GENOMIC DNA]</scope>
    <source>
        <strain>BNC1</strain>
    </source>
</reference>